<protein>
    <recommendedName>
        <fullName evidence="3">Probable cinnamyl alcohol dehydrogenase 8A</fullName>
        <shortName evidence="2">OsCAD8A</shortName>
        <ecNumber evidence="1">1.1.1.195</ecNumber>
    </recommendedName>
</protein>
<gene>
    <name evidence="2" type="primary">CAD8A</name>
    <name type="ordered locus">Os09g0399800</name>
    <name type="ordered locus">LOC_Os09g23530</name>
    <name type="ORF">P0435D08.27</name>
    <name type="ORF">P0650H04.9</name>
</gene>
<reference key="1">
    <citation type="journal article" date="2005" name="Nature">
        <title>The map-based sequence of the rice genome.</title>
        <authorList>
            <consortium name="International rice genome sequencing project (IRGSP)"/>
        </authorList>
    </citation>
    <scope>NUCLEOTIDE SEQUENCE [LARGE SCALE GENOMIC DNA]</scope>
    <source>
        <strain>cv. Nipponbare</strain>
    </source>
</reference>
<reference key="2">
    <citation type="journal article" date="2008" name="Nucleic Acids Res.">
        <title>The rice annotation project database (RAP-DB): 2008 update.</title>
        <authorList>
            <consortium name="The rice annotation project (RAP)"/>
        </authorList>
    </citation>
    <scope>GENOME REANNOTATION</scope>
    <source>
        <strain>cv. Nipponbare</strain>
    </source>
</reference>
<reference key="3">
    <citation type="journal article" date="2013" name="Rice">
        <title>Improvement of the Oryza sativa Nipponbare reference genome using next generation sequence and optical map data.</title>
        <authorList>
            <person name="Kawahara Y."/>
            <person name="de la Bastide M."/>
            <person name="Hamilton J.P."/>
            <person name="Kanamori H."/>
            <person name="McCombie W.R."/>
            <person name="Ouyang S."/>
            <person name="Schwartz D.C."/>
            <person name="Tanaka T."/>
            <person name="Wu J."/>
            <person name="Zhou S."/>
            <person name="Childs K.L."/>
            <person name="Davidson R.M."/>
            <person name="Lin H."/>
            <person name="Quesada-Ocampo L."/>
            <person name="Vaillancourt B."/>
            <person name="Sakai H."/>
            <person name="Lee S.S."/>
            <person name="Kim J."/>
            <person name="Numa H."/>
            <person name="Itoh T."/>
            <person name="Buell C.R."/>
            <person name="Matsumoto T."/>
        </authorList>
    </citation>
    <scope>GENOME REANNOTATION</scope>
    <source>
        <strain>cv. Nipponbare</strain>
    </source>
</reference>
<reference key="4">
    <citation type="journal article" date="2003" name="Science">
        <title>Collection, mapping, and annotation of over 28,000 cDNA clones from japonica rice.</title>
        <authorList>
            <consortium name="The rice full-length cDNA consortium"/>
        </authorList>
    </citation>
    <scope>NUCLEOTIDE SEQUENCE [LARGE SCALE MRNA]</scope>
    <source>
        <strain>cv. Nipponbare</strain>
    </source>
</reference>
<reference key="5">
    <citation type="journal article" date="2005" name="Planta">
        <title>Structure of the cinnamyl-alcohol dehydrogenase gene family in rice and promoter activity of a member associated with lignification.</title>
        <authorList>
            <person name="Tobias C.M."/>
            <person name="Chow E.K."/>
        </authorList>
    </citation>
    <scope>GENE FAMILY</scope>
    <scope>NOMENCLATURE</scope>
</reference>
<proteinExistence type="evidence at transcript level"/>
<comment type="function">
    <text evidence="1">Involved in lignin biosynthesis. Catalyzes the final step specific for the production of lignin monomers. Catalyzes the NADPH-dependent reduction of coniferaldehyde, 5-hydroxyconiferaldehyde, sinapaldehyde, 4-coumaraldehyde and caffeyl aldehyde to their respective alcohols.</text>
</comment>
<comment type="catalytic activity">
    <reaction evidence="1">
        <text>(E)-cinnamyl alcohol + NADP(+) = (E)-cinnamaldehyde + NADPH + H(+)</text>
        <dbReference type="Rhea" id="RHEA:10392"/>
        <dbReference type="ChEBI" id="CHEBI:15378"/>
        <dbReference type="ChEBI" id="CHEBI:16731"/>
        <dbReference type="ChEBI" id="CHEBI:33227"/>
        <dbReference type="ChEBI" id="CHEBI:57783"/>
        <dbReference type="ChEBI" id="CHEBI:58349"/>
        <dbReference type="EC" id="1.1.1.195"/>
    </reaction>
    <physiologicalReaction direction="right-to-left" evidence="1">
        <dbReference type="Rhea" id="RHEA:10394"/>
    </physiologicalReaction>
</comment>
<comment type="catalytic activity">
    <reaction evidence="1">
        <text>(E)-coniferol + NADP(+) = (E)-coniferaldehyde + NADPH + H(+)</text>
        <dbReference type="Rhea" id="RHEA:22444"/>
        <dbReference type="ChEBI" id="CHEBI:15378"/>
        <dbReference type="ChEBI" id="CHEBI:16547"/>
        <dbReference type="ChEBI" id="CHEBI:17745"/>
        <dbReference type="ChEBI" id="CHEBI:57783"/>
        <dbReference type="ChEBI" id="CHEBI:58349"/>
        <dbReference type="EC" id="1.1.1.195"/>
    </reaction>
    <physiologicalReaction direction="right-to-left" evidence="1">
        <dbReference type="Rhea" id="RHEA:22446"/>
    </physiologicalReaction>
</comment>
<comment type="catalytic activity">
    <reaction evidence="1">
        <text>(E)-sinapyl alcohol + NADP(+) = (E)-sinapaldehyde + NADPH + H(+)</text>
        <dbReference type="Rhea" id="RHEA:45704"/>
        <dbReference type="ChEBI" id="CHEBI:15378"/>
        <dbReference type="ChEBI" id="CHEBI:27949"/>
        <dbReference type="ChEBI" id="CHEBI:57783"/>
        <dbReference type="ChEBI" id="CHEBI:58349"/>
        <dbReference type="ChEBI" id="CHEBI:64557"/>
        <dbReference type="EC" id="1.1.1.195"/>
    </reaction>
    <physiologicalReaction direction="right-to-left" evidence="1">
        <dbReference type="Rhea" id="RHEA:45706"/>
    </physiologicalReaction>
</comment>
<comment type="catalytic activity">
    <reaction evidence="1">
        <text>(E)-4-coumaroyl alcohol + NADP(+) = (E)-4-coumaraldehyde + NADPH + H(+)</text>
        <dbReference type="Rhea" id="RHEA:45724"/>
        <dbReference type="ChEBI" id="CHEBI:15378"/>
        <dbReference type="ChEBI" id="CHEBI:28353"/>
        <dbReference type="ChEBI" id="CHEBI:57783"/>
        <dbReference type="ChEBI" id="CHEBI:58349"/>
        <dbReference type="ChEBI" id="CHEBI:64555"/>
        <dbReference type="EC" id="1.1.1.195"/>
    </reaction>
    <physiologicalReaction direction="right-to-left" evidence="1">
        <dbReference type="Rhea" id="RHEA:45726"/>
    </physiologicalReaction>
</comment>
<comment type="catalytic activity">
    <reaction evidence="1">
        <text>(E)-caffeyl alcohol + NADP(+) = (E)-caffeyl aldehyde + NADPH + H(+)</text>
        <dbReference type="Rhea" id="RHEA:45728"/>
        <dbReference type="ChEBI" id="CHEBI:15378"/>
        <dbReference type="ChEBI" id="CHEBI:28323"/>
        <dbReference type="ChEBI" id="CHEBI:31334"/>
        <dbReference type="ChEBI" id="CHEBI:57783"/>
        <dbReference type="ChEBI" id="CHEBI:58349"/>
    </reaction>
    <physiologicalReaction direction="right-to-left" evidence="1">
        <dbReference type="Rhea" id="RHEA:45730"/>
    </physiologicalReaction>
</comment>
<comment type="cofactor">
    <cofactor evidence="1">
        <name>Zn(2+)</name>
        <dbReference type="ChEBI" id="CHEBI:29105"/>
    </cofactor>
    <text evidence="1">Binds 2 Zn(2+) ions per subunit.</text>
</comment>
<comment type="pathway">
    <text evidence="1">Aromatic compound metabolism; phenylpropanoid biosynthesis.</text>
</comment>
<comment type="subunit">
    <text evidence="1">Homodimer.</text>
</comment>
<comment type="similarity">
    <text evidence="3">Belongs to the zinc-containing alcohol dehydrogenase family.</text>
</comment>
<accession>Q6ERX1</accession>
<accession>A0A0P0XLT8</accession>
<dbReference type="EC" id="1.1.1.195" evidence="1"/>
<dbReference type="EMBL" id="AP005321">
    <property type="protein sequence ID" value="BAD28498.1"/>
    <property type="molecule type" value="Genomic_DNA"/>
</dbReference>
<dbReference type="EMBL" id="AP005421">
    <property type="protein sequence ID" value="BAD28599.1"/>
    <property type="molecule type" value="Genomic_DNA"/>
</dbReference>
<dbReference type="EMBL" id="AP008215">
    <property type="protein sequence ID" value="BAF25023.1"/>
    <property type="molecule type" value="Genomic_DNA"/>
</dbReference>
<dbReference type="EMBL" id="AP014965">
    <property type="protein sequence ID" value="BAT07957.1"/>
    <property type="molecule type" value="Genomic_DNA"/>
</dbReference>
<dbReference type="EMBL" id="AK059858">
    <property type="protein sequence ID" value="BAG87172.1"/>
    <property type="molecule type" value="mRNA"/>
</dbReference>
<dbReference type="RefSeq" id="XP_015651435.1">
    <property type="nucleotide sequence ID" value="XM_015795949.1"/>
</dbReference>
<dbReference type="SMR" id="Q6ERX1"/>
<dbReference type="FunCoup" id="Q6ERX1">
    <property type="interactions" value="57"/>
</dbReference>
<dbReference type="STRING" id="39947.Q6ERX1"/>
<dbReference type="PaxDb" id="39947-Q6ERX1"/>
<dbReference type="EnsemblPlants" id="Os09t0399800-01">
    <property type="protein sequence ID" value="Os09t0399800-01"/>
    <property type="gene ID" value="Os09g0399800"/>
</dbReference>
<dbReference type="Gramene" id="Os09t0399800-01">
    <property type="protein sequence ID" value="Os09t0399800-01"/>
    <property type="gene ID" value="Os09g0399800"/>
</dbReference>
<dbReference type="KEGG" id="dosa:Os09g0399800"/>
<dbReference type="eggNOG" id="KOG0023">
    <property type="taxonomic scope" value="Eukaryota"/>
</dbReference>
<dbReference type="HOGENOM" id="CLU_026673_20_2_1"/>
<dbReference type="InParanoid" id="Q6ERX1"/>
<dbReference type="OMA" id="KEQWLFK"/>
<dbReference type="OrthoDB" id="1879366at2759"/>
<dbReference type="UniPathway" id="UPA00711"/>
<dbReference type="Proteomes" id="UP000000763">
    <property type="component" value="Chromosome 9"/>
</dbReference>
<dbReference type="Proteomes" id="UP000059680">
    <property type="component" value="Chromosome 9"/>
</dbReference>
<dbReference type="GO" id="GO:0045551">
    <property type="term" value="F:cinnamyl-alcohol dehydrogenase activity"/>
    <property type="evidence" value="ECO:0000318"/>
    <property type="project" value="GO_Central"/>
</dbReference>
<dbReference type="GO" id="GO:0050268">
    <property type="term" value="F:coniferyl-alcohol dehydrogenase activity"/>
    <property type="evidence" value="ECO:0007669"/>
    <property type="project" value="RHEA"/>
</dbReference>
<dbReference type="GO" id="GO:0008270">
    <property type="term" value="F:zinc ion binding"/>
    <property type="evidence" value="ECO:0007669"/>
    <property type="project" value="InterPro"/>
</dbReference>
<dbReference type="GO" id="GO:0009809">
    <property type="term" value="P:lignin biosynthetic process"/>
    <property type="evidence" value="ECO:0000318"/>
    <property type="project" value="GO_Central"/>
</dbReference>
<dbReference type="CDD" id="cd05283">
    <property type="entry name" value="CAD1"/>
    <property type="match status" value="1"/>
</dbReference>
<dbReference type="FunFam" id="3.40.50.720:FF:000022">
    <property type="entry name" value="Cinnamyl alcohol dehydrogenase"/>
    <property type="match status" value="1"/>
</dbReference>
<dbReference type="FunFam" id="3.90.180.10:FF:000004">
    <property type="entry name" value="probable cinnamyl alcohol dehydrogenase"/>
    <property type="match status" value="1"/>
</dbReference>
<dbReference type="Gene3D" id="3.90.180.10">
    <property type="entry name" value="Medium-chain alcohol dehydrogenases, catalytic domain"/>
    <property type="match status" value="1"/>
</dbReference>
<dbReference type="Gene3D" id="3.40.50.720">
    <property type="entry name" value="NAD(P)-binding Rossmann-like Domain"/>
    <property type="match status" value="1"/>
</dbReference>
<dbReference type="InterPro" id="IPR013149">
    <property type="entry name" value="ADH-like_C"/>
</dbReference>
<dbReference type="InterPro" id="IPR013154">
    <property type="entry name" value="ADH-like_N"/>
</dbReference>
<dbReference type="InterPro" id="IPR002328">
    <property type="entry name" value="ADH_Zn_CS"/>
</dbReference>
<dbReference type="InterPro" id="IPR047109">
    <property type="entry name" value="CAD-like"/>
</dbReference>
<dbReference type="InterPro" id="IPR011032">
    <property type="entry name" value="GroES-like_sf"/>
</dbReference>
<dbReference type="InterPro" id="IPR036291">
    <property type="entry name" value="NAD(P)-bd_dom_sf"/>
</dbReference>
<dbReference type="InterPro" id="IPR020843">
    <property type="entry name" value="PKS_ER"/>
</dbReference>
<dbReference type="PANTHER" id="PTHR42683">
    <property type="entry name" value="ALDEHYDE REDUCTASE"/>
    <property type="match status" value="1"/>
</dbReference>
<dbReference type="Pfam" id="PF08240">
    <property type="entry name" value="ADH_N"/>
    <property type="match status" value="1"/>
</dbReference>
<dbReference type="Pfam" id="PF00107">
    <property type="entry name" value="ADH_zinc_N"/>
    <property type="match status" value="1"/>
</dbReference>
<dbReference type="SMART" id="SM00829">
    <property type="entry name" value="PKS_ER"/>
    <property type="match status" value="1"/>
</dbReference>
<dbReference type="SUPFAM" id="SSF50129">
    <property type="entry name" value="GroES-like"/>
    <property type="match status" value="1"/>
</dbReference>
<dbReference type="SUPFAM" id="SSF51735">
    <property type="entry name" value="NAD(P)-binding Rossmann-fold domains"/>
    <property type="match status" value="1"/>
</dbReference>
<dbReference type="PROSITE" id="PS00059">
    <property type="entry name" value="ADH_ZINC"/>
    <property type="match status" value="1"/>
</dbReference>
<keyword id="KW-0438">Lignin biosynthesis</keyword>
<keyword id="KW-0479">Metal-binding</keyword>
<keyword id="KW-0521">NADP</keyword>
<keyword id="KW-0560">Oxidoreductase</keyword>
<keyword id="KW-1185">Reference proteome</keyword>
<keyword id="KW-0862">Zinc</keyword>
<evidence type="ECO:0000250" key="1">
    <source>
        <dbReference type="UniProtKB" id="O49482"/>
    </source>
</evidence>
<evidence type="ECO:0000303" key="2">
    <source>
    </source>
</evidence>
<evidence type="ECO:0000305" key="3"/>
<organism>
    <name type="scientific">Oryza sativa subsp. japonica</name>
    <name type="common">Rice</name>
    <dbReference type="NCBI Taxonomy" id="39947"/>
    <lineage>
        <taxon>Eukaryota</taxon>
        <taxon>Viridiplantae</taxon>
        <taxon>Streptophyta</taxon>
        <taxon>Embryophyta</taxon>
        <taxon>Tracheophyta</taxon>
        <taxon>Spermatophyta</taxon>
        <taxon>Magnoliopsida</taxon>
        <taxon>Liliopsida</taxon>
        <taxon>Poales</taxon>
        <taxon>Poaceae</taxon>
        <taxon>BOP clade</taxon>
        <taxon>Oryzoideae</taxon>
        <taxon>Oryzeae</taxon>
        <taxon>Oryzinae</taxon>
        <taxon>Oryza</taxon>
        <taxon>Oryza sativa</taxon>
    </lineage>
</organism>
<name>CAD8A_ORYSJ</name>
<feature type="chain" id="PRO_0000382647" description="Probable cinnamyl alcohol dehydrogenase 8A">
    <location>
        <begin position="1"/>
        <end position="359"/>
    </location>
</feature>
<feature type="binding site" evidence="1">
    <location>
        <position position="45"/>
    </location>
    <ligand>
        <name>Zn(2+)</name>
        <dbReference type="ChEBI" id="CHEBI:29105"/>
        <label>1</label>
        <note>catalytic</note>
    </ligand>
</feature>
<feature type="binding site" evidence="1">
    <location>
        <position position="47"/>
    </location>
    <ligand>
        <name>NADP(+)</name>
        <dbReference type="ChEBI" id="CHEBI:58349"/>
    </ligand>
</feature>
<feature type="binding site" evidence="1">
    <location>
        <position position="67"/>
    </location>
    <ligand>
        <name>Zn(2+)</name>
        <dbReference type="ChEBI" id="CHEBI:29105"/>
        <label>1</label>
        <note>catalytic</note>
    </ligand>
</feature>
<feature type="binding site" evidence="1">
    <location>
        <position position="68"/>
    </location>
    <ligand>
        <name>Zn(2+)</name>
        <dbReference type="ChEBI" id="CHEBI:29105"/>
        <label>1</label>
        <note>catalytic</note>
    </ligand>
</feature>
<feature type="binding site" evidence="1">
    <location>
        <position position="98"/>
    </location>
    <ligand>
        <name>Zn(2+)</name>
        <dbReference type="ChEBI" id="CHEBI:29105"/>
        <label>2</label>
    </ligand>
</feature>
<feature type="binding site" evidence="1">
    <location>
        <position position="101"/>
    </location>
    <ligand>
        <name>Zn(2+)</name>
        <dbReference type="ChEBI" id="CHEBI:29105"/>
        <label>2</label>
    </ligand>
</feature>
<feature type="binding site" evidence="1">
    <location>
        <position position="104"/>
    </location>
    <ligand>
        <name>Zn(2+)</name>
        <dbReference type="ChEBI" id="CHEBI:29105"/>
        <label>2</label>
    </ligand>
</feature>
<feature type="binding site" evidence="1">
    <location>
        <position position="112"/>
    </location>
    <ligand>
        <name>Zn(2+)</name>
        <dbReference type="ChEBI" id="CHEBI:29105"/>
        <label>2</label>
    </ligand>
</feature>
<feature type="binding site" evidence="1">
    <location>
        <position position="161"/>
    </location>
    <ligand>
        <name>Zn(2+)</name>
        <dbReference type="ChEBI" id="CHEBI:29105"/>
        <label>1</label>
        <note>catalytic</note>
    </ligand>
</feature>
<feature type="binding site" evidence="1">
    <location>
        <position position="165"/>
    </location>
    <ligand>
        <name>NADP(+)</name>
        <dbReference type="ChEBI" id="CHEBI:58349"/>
    </ligand>
</feature>
<feature type="binding site" evidence="1">
    <location>
        <begin position="186"/>
        <end position="191"/>
    </location>
    <ligand>
        <name>NADP(+)</name>
        <dbReference type="ChEBI" id="CHEBI:58349"/>
    </ligand>
</feature>
<feature type="binding site" evidence="1">
    <location>
        <begin position="209"/>
        <end position="214"/>
    </location>
    <ligand>
        <name>NADP(+)</name>
        <dbReference type="ChEBI" id="CHEBI:58349"/>
    </ligand>
</feature>
<feature type="binding site" evidence="1">
    <location>
        <position position="249"/>
    </location>
    <ligand>
        <name>NADP(+)</name>
        <dbReference type="ChEBI" id="CHEBI:58349"/>
    </ligand>
</feature>
<feature type="binding site" evidence="1">
    <location>
        <position position="273"/>
    </location>
    <ligand>
        <name>NADP(+)</name>
        <dbReference type="ChEBI" id="CHEBI:58349"/>
    </ligand>
</feature>
<feature type="binding site" evidence="1">
    <location>
        <begin position="296"/>
        <end position="298"/>
    </location>
    <ligand>
        <name>NADP(+)</name>
        <dbReference type="ChEBI" id="CHEBI:58349"/>
    </ligand>
</feature>
<sequence length="359" mass="36837">MEHDGTAALGWAARDASGHLSPFSFTRRVQEEDDVTIKVLYCGICHTDLHTIKNEWGNAMYPVVPGHEIVGVVAGVGAGVTRFKAGDTVGVGYFVDSCRACDSCGKGDENYCPTMVITSNGTDYGGATTQGGFSDVMVVRQDYVLRVPASLPPDGAAPLLCAGVTVYSPMVEYGLNAPGKHLGVVGLGGLGHLGVKFGKAFGMKVTVISSSPAKREEALERLGADAFLSSRDGEGMAAAAATMDGIIDTVSAGHPLVPLLSLLKPKGQMVVVGAPAAPLQLPAIAIIDGGKRVAGSGGGSVAECQAMLDFAGEHGIAADVEVVAMGDVNAALGRLERNDVRYRFVIDVAGTLHAAAAPS</sequence>